<organism>
    <name type="scientific">Rhizobium etli (strain ATCC 51251 / DSM 11541 / JCM 21823 / NBRC 15573 / CFN 42)</name>
    <dbReference type="NCBI Taxonomy" id="347834"/>
    <lineage>
        <taxon>Bacteria</taxon>
        <taxon>Pseudomonadati</taxon>
        <taxon>Pseudomonadota</taxon>
        <taxon>Alphaproteobacteria</taxon>
        <taxon>Hyphomicrobiales</taxon>
        <taxon>Rhizobiaceae</taxon>
        <taxon>Rhizobium/Agrobacterium group</taxon>
        <taxon>Rhizobium</taxon>
    </lineage>
</organism>
<sequence>MTLIVEAKQRLGAFSLDAAFTSEGGVTAFFGRSGSGKTSLIRIIAGLARPDGGRVVLDGERLTETTAGIFVPKHRRRFGYVFQEARLFPHLSVRANLSYGRWFAPKAGRSESFDHIIDLLGIETLLERSPAKLSGGEKQRVAIGRALLSSPRLLLMDEPLAALDEARKAEILPYLERLRDETEIPIVYVSHSIAEVARLANQVVVLSDGKVQATGPAVDILSRPSAAADRKEAGALLEGTVESFDARHRLSTVTLKSSQLHIPSAVLTPGRPVRIRIPSRDVMLATARPEGLSALNILEGRIEAISPGEDGTVEIRIDCAGDAILSRITALSCERLDLRPGKTVFAIIKTVALEG</sequence>
<comment type="function">
    <text evidence="1">Part of the ABC transporter complex ModABC involved in molybdenum import. Responsible for energy coupling to the transport system.</text>
</comment>
<comment type="catalytic activity">
    <reaction evidence="1">
        <text>molybdate(out) + ATP + H2O = molybdate(in) + ADP + phosphate + H(+)</text>
        <dbReference type="Rhea" id="RHEA:22020"/>
        <dbReference type="ChEBI" id="CHEBI:15377"/>
        <dbReference type="ChEBI" id="CHEBI:15378"/>
        <dbReference type="ChEBI" id="CHEBI:30616"/>
        <dbReference type="ChEBI" id="CHEBI:36264"/>
        <dbReference type="ChEBI" id="CHEBI:43474"/>
        <dbReference type="ChEBI" id="CHEBI:456216"/>
        <dbReference type="EC" id="7.3.2.5"/>
    </reaction>
</comment>
<comment type="subunit">
    <text evidence="1">The complex is composed of two ATP-binding proteins (ModC), two transmembrane proteins (ModB) and a solute-binding protein (ModA).</text>
</comment>
<comment type="subcellular location">
    <subcellularLocation>
        <location evidence="1">Cell inner membrane</location>
        <topology evidence="1">Peripheral membrane protein</topology>
    </subcellularLocation>
</comment>
<comment type="similarity">
    <text evidence="1">Belongs to the ABC transporter superfamily. Molybdate importer (TC 3.A.1.8) family.</text>
</comment>
<proteinExistence type="inferred from homology"/>
<protein>
    <recommendedName>
        <fullName evidence="1">Molybdenum import ATP-binding protein ModC</fullName>
        <ecNumber evidence="1">7.3.2.5</ecNumber>
    </recommendedName>
</protein>
<keyword id="KW-0067">ATP-binding</keyword>
<keyword id="KW-0997">Cell inner membrane</keyword>
<keyword id="KW-1003">Cell membrane</keyword>
<keyword id="KW-0472">Membrane</keyword>
<keyword id="KW-0500">Molybdenum</keyword>
<keyword id="KW-0547">Nucleotide-binding</keyword>
<keyword id="KW-1185">Reference proteome</keyword>
<keyword id="KW-1278">Translocase</keyword>
<keyword id="KW-0813">Transport</keyword>
<feature type="chain" id="PRO_0000271681" description="Molybdenum import ATP-binding protein ModC">
    <location>
        <begin position="1"/>
        <end position="355"/>
    </location>
</feature>
<feature type="domain" description="ABC transporter" evidence="1">
    <location>
        <begin position="1"/>
        <end position="233"/>
    </location>
</feature>
<feature type="domain" description="Mop" evidence="2">
    <location>
        <begin position="291"/>
        <end position="355"/>
    </location>
</feature>
<feature type="binding site" evidence="1">
    <location>
        <begin position="31"/>
        <end position="38"/>
    </location>
    <ligand>
        <name>ATP</name>
        <dbReference type="ChEBI" id="CHEBI:30616"/>
    </ligand>
</feature>
<gene>
    <name evidence="1" type="primary">modC</name>
    <name type="ordered locus">RHE_CH04073</name>
</gene>
<dbReference type="EC" id="7.3.2.5" evidence="1"/>
<dbReference type="EMBL" id="CP000133">
    <property type="protein sequence ID" value="ABC92816.1"/>
    <property type="molecule type" value="Genomic_DNA"/>
</dbReference>
<dbReference type="RefSeq" id="WP_011427256.1">
    <property type="nucleotide sequence ID" value="NC_007761.1"/>
</dbReference>
<dbReference type="SMR" id="Q2K2X0"/>
<dbReference type="KEGG" id="ret:RHE_CH04073"/>
<dbReference type="eggNOG" id="COG4148">
    <property type="taxonomic scope" value="Bacteria"/>
</dbReference>
<dbReference type="HOGENOM" id="CLU_000604_1_1_5"/>
<dbReference type="OrthoDB" id="9802264at2"/>
<dbReference type="Proteomes" id="UP000001936">
    <property type="component" value="Chromosome"/>
</dbReference>
<dbReference type="GO" id="GO:0005886">
    <property type="term" value="C:plasma membrane"/>
    <property type="evidence" value="ECO:0007669"/>
    <property type="project" value="UniProtKB-SubCell"/>
</dbReference>
<dbReference type="GO" id="GO:0015412">
    <property type="term" value="F:ABC-type molybdate transporter activity"/>
    <property type="evidence" value="ECO:0007669"/>
    <property type="project" value="UniProtKB-EC"/>
</dbReference>
<dbReference type="GO" id="GO:0005524">
    <property type="term" value="F:ATP binding"/>
    <property type="evidence" value="ECO:0007669"/>
    <property type="project" value="UniProtKB-KW"/>
</dbReference>
<dbReference type="GO" id="GO:0016887">
    <property type="term" value="F:ATP hydrolysis activity"/>
    <property type="evidence" value="ECO:0007669"/>
    <property type="project" value="InterPro"/>
</dbReference>
<dbReference type="Gene3D" id="2.40.50.100">
    <property type="match status" value="1"/>
</dbReference>
<dbReference type="Gene3D" id="3.40.50.300">
    <property type="entry name" value="P-loop containing nucleotide triphosphate hydrolases"/>
    <property type="match status" value="1"/>
</dbReference>
<dbReference type="InterPro" id="IPR003593">
    <property type="entry name" value="AAA+_ATPase"/>
</dbReference>
<dbReference type="InterPro" id="IPR003439">
    <property type="entry name" value="ABC_transporter-like_ATP-bd"/>
</dbReference>
<dbReference type="InterPro" id="IPR017871">
    <property type="entry name" value="ABC_transporter-like_CS"/>
</dbReference>
<dbReference type="InterPro" id="IPR008995">
    <property type="entry name" value="Mo/tungstate-bd_C_term_dom"/>
</dbReference>
<dbReference type="InterPro" id="IPR011868">
    <property type="entry name" value="ModC_ABC_ATP-bd"/>
</dbReference>
<dbReference type="InterPro" id="IPR050334">
    <property type="entry name" value="Molybdenum_import_ModC"/>
</dbReference>
<dbReference type="InterPro" id="IPR004606">
    <property type="entry name" value="Mop_domain"/>
</dbReference>
<dbReference type="InterPro" id="IPR027417">
    <property type="entry name" value="P-loop_NTPase"/>
</dbReference>
<dbReference type="InterPro" id="IPR005116">
    <property type="entry name" value="Transp-assoc_OB_typ1"/>
</dbReference>
<dbReference type="NCBIfam" id="TIGR02142">
    <property type="entry name" value="modC_ABC"/>
    <property type="match status" value="1"/>
</dbReference>
<dbReference type="PANTHER" id="PTHR43514">
    <property type="entry name" value="ABC TRANSPORTER I FAMILY MEMBER 10"/>
    <property type="match status" value="1"/>
</dbReference>
<dbReference type="PANTHER" id="PTHR43514:SF4">
    <property type="entry name" value="ABC TRANSPORTER I FAMILY MEMBER 10"/>
    <property type="match status" value="1"/>
</dbReference>
<dbReference type="Pfam" id="PF00005">
    <property type="entry name" value="ABC_tran"/>
    <property type="match status" value="1"/>
</dbReference>
<dbReference type="Pfam" id="PF03459">
    <property type="entry name" value="TOBE"/>
    <property type="match status" value="1"/>
</dbReference>
<dbReference type="SMART" id="SM00382">
    <property type="entry name" value="AAA"/>
    <property type="match status" value="1"/>
</dbReference>
<dbReference type="SUPFAM" id="SSF50331">
    <property type="entry name" value="MOP-like"/>
    <property type="match status" value="1"/>
</dbReference>
<dbReference type="SUPFAM" id="SSF52540">
    <property type="entry name" value="P-loop containing nucleoside triphosphate hydrolases"/>
    <property type="match status" value="1"/>
</dbReference>
<dbReference type="PROSITE" id="PS00211">
    <property type="entry name" value="ABC_TRANSPORTER_1"/>
    <property type="match status" value="1"/>
</dbReference>
<dbReference type="PROSITE" id="PS50893">
    <property type="entry name" value="ABC_TRANSPORTER_2"/>
    <property type="match status" value="1"/>
</dbReference>
<dbReference type="PROSITE" id="PS51241">
    <property type="entry name" value="MODC"/>
    <property type="match status" value="1"/>
</dbReference>
<dbReference type="PROSITE" id="PS51866">
    <property type="entry name" value="MOP"/>
    <property type="match status" value="1"/>
</dbReference>
<name>MODC_RHIEC</name>
<accession>Q2K2X0</accession>
<evidence type="ECO:0000255" key="1">
    <source>
        <dbReference type="HAMAP-Rule" id="MF_01705"/>
    </source>
</evidence>
<evidence type="ECO:0000255" key="2">
    <source>
        <dbReference type="PROSITE-ProRule" id="PRU01213"/>
    </source>
</evidence>
<reference key="1">
    <citation type="journal article" date="2006" name="Proc. Natl. Acad. Sci. U.S.A.">
        <title>The partitioned Rhizobium etli genome: genetic and metabolic redundancy in seven interacting replicons.</title>
        <authorList>
            <person name="Gonzalez V."/>
            <person name="Santamaria R.I."/>
            <person name="Bustos P."/>
            <person name="Hernandez-Gonzalez I."/>
            <person name="Medrano-Soto A."/>
            <person name="Moreno-Hagelsieb G."/>
            <person name="Janga S.C."/>
            <person name="Ramirez M.A."/>
            <person name="Jimenez-Jacinto V."/>
            <person name="Collado-Vides J."/>
            <person name="Davila G."/>
        </authorList>
    </citation>
    <scope>NUCLEOTIDE SEQUENCE [LARGE SCALE GENOMIC DNA]</scope>
    <source>
        <strain>ATCC 51251 / DSM 11541 / JCM 21823 / NBRC 15573 / CFN 42</strain>
    </source>
</reference>